<name>PDAD_CHLL3</name>
<protein>
    <recommendedName>
        <fullName evidence="1">Probable pyruvoyl-dependent arginine decarboxylase</fullName>
        <shortName evidence="1">PvlArgDC</shortName>
        <ecNumber evidence="1">4.1.1.19</ecNumber>
    </recommendedName>
    <component>
        <recommendedName>
            <fullName evidence="1">Pyruvoyl-dependent arginine decarboxylase subunit beta</fullName>
        </recommendedName>
    </component>
    <component>
        <recommendedName>
            <fullName evidence="1">Pyruvoyl-dependent arginine decarboxylase subunit alpha</fullName>
        </recommendedName>
    </component>
</protein>
<proteinExistence type="inferred from homology"/>
<dbReference type="EC" id="4.1.1.19" evidence="1"/>
<dbReference type="EMBL" id="CP000096">
    <property type="protein sequence ID" value="ABB23450.1"/>
    <property type="molecule type" value="Genomic_DNA"/>
</dbReference>
<dbReference type="RefSeq" id="WP_011357325.1">
    <property type="nucleotide sequence ID" value="NC_007512.1"/>
</dbReference>
<dbReference type="SMR" id="Q3B5D1"/>
<dbReference type="STRING" id="319225.Plut_0567"/>
<dbReference type="KEGG" id="plt:Plut_0567"/>
<dbReference type="eggNOG" id="COG1945">
    <property type="taxonomic scope" value="Bacteria"/>
</dbReference>
<dbReference type="HOGENOM" id="CLU_114389_0_0_10"/>
<dbReference type="OrthoDB" id="9783061at2"/>
<dbReference type="Proteomes" id="UP000002709">
    <property type="component" value="Chromosome"/>
</dbReference>
<dbReference type="GO" id="GO:0008792">
    <property type="term" value="F:arginine decarboxylase activity"/>
    <property type="evidence" value="ECO:0007669"/>
    <property type="project" value="UniProtKB-UniRule"/>
</dbReference>
<dbReference type="GO" id="GO:0006527">
    <property type="term" value="P:arginine catabolic process"/>
    <property type="evidence" value="ECO:0007669"/>
    <property type="project" value="InterPro"/>
</dbReference>
<dbReference type="Gene3D" id="3.30.60.30">
    <property type="match status" value="1"/>
</dbReference>
<dbReference type="Gene3D" id="3.50.20.10">
    <property type="entry name" value="Pyruvoyl-Dependent Histidine Decarboxylase, subunit B"/>
    <property type="match status" value="1"/>
</dbReference>
<dbReference type="HAMAP" id="MF_01404">
    <property type="entry name" value="PvlArgDC"/>
    <property type="match status" value="1"/>
</dbReference>
<dbReference type="InterPro" id="IPR016104">
    <property type="entry name" value="Pyr-dep_his/arg-deCO2ase"/>
</dbReference>
<dbReference type="InterPro" id="IPR016105">
    <property type="entry name" value="Pyr-dep_his/arg-deCO2ase_sand"/>
</dbReference>
<dbReference type="InterPro" id="IPR002724">
    <property type="entry name" value="Pyruvoyl-dep_arg_deCO2ase"/>
</dbReference>
<dbReference type="NCBIfam" id="TIGR00286">
    <property type="entry name" value="pyruvoyl-dependent arginine decarboxylase"/>
    <property type="match status" value="1"/>
</dbReference>
<dbReference type="PANTHER" id="PTHR40438">
    <property type="entry name" value="PYRUVOYL-DEPENDENT ARGININE DECARBOXYLASE"/>
    <property type="match status" value="1"/>
</dbReference>
<dbReference type="PANTHER" id="PTHR40438:SF1">
    <property type="entry name" value="PYRUVOYL-DEPENDENT ARGININE DECARBOXYLASE"/>
    <property type="match status" value="1"/>
</dbReference>
<dbReference type="Pfam" id="PF01862">
    <property type="entry name" value="PvlArgDC"/>
    <property type="match status" value="1"/>
</dbReference>
<dbReference type="PIRSF" id="PIRSF005216">
    <property type="entry name" value="Pyruvoyl-dep_arg_deCO2ase"/>
    <property type="match status" value="1"/>
</dbReference>
<dbReference type="SFLD" id="SFLDG01170">
    <property type="entry name" value="Pyruvoyl-dependent_arginine_de"/>
    <property type="match status" value="1"/>
</dbReference>
<dbReference type="SFLD" id="SFLDS00055">
    <property type="entry name" value="Pyruvoyl-Dependent_Histidine/A"/>
    <property type="match status" value="1"/>
</dbReference>
<dbReference type="SUPFAM" id="SSF56271">
    <property type="entry name" value="Pyruvoyl-dependent histidine and arginine decarboxylases"/>
    <property type="match status" value="1"/>
</dbReference>
<gene>
    <name evidence="1" type="primary">pdaD</name>
    <name type="ordered locus">Plut_0567</name>
</gene>
<reference key="1">
    <citation type="submission" date="2005-08" db="EMBL/GenBank/DDBJ databases">
        <title>Complete sequence of Pelodictyon luteolum DSM 273.</title>
        <authorList>
            <consortium name="US DOE Joint Genome Institute"/>
            <person name="Copeland A."/>
            <person name="Lucas S."/>
            <person name="Lapidus A."/>
            <person name="Barry K."/>
            <person name="Detter J.C."/>
            <person name="Glavina T."/>
            <person name="Hammon N."/>
            <person name="Israni S."/>
            <person name="Pitluck S."/>
            <person name="Bryant D."/>
            <person name="Schmutz J."/>
            <person name="Larimer F."/>
            <person name="Land M."/>
            <person name="Kyrpides N."/>
            <person name="Ivanova N."/>
            <person name="Richardson P."/>
        </authorList>
    </citation>
    <scope>NUCLEOTIDE SEQUENCE [LARGE SCALE GENOMIC DNA]</scope>
    <source>
        <strain>DSM 273 / BCRC 81028 / 2530</strain>
    </source>
</reference>
<organism>
    <name type="scientific">Chlorobium luteolum (strain DSM 273 / BCRC 81028 / 2530)</name>
    <name type="common">Pelodictyon luteolum</name>
    <dbReference type="NCBI Taxonomy" id="319225"/>
    <lineage>
        <taxon>Bacteria</taxon>
        <taxon>Pseudomonadati</taxon>
        <taxon>Chlorobiota</taxon>
        <taxon>Chlorobiia</taxon>
        <taxon>Chlorobiales</taxon>
        <taxon>Chlorobiaceae</taxon>
        <taxon>Chlorobium/Pelodictyon group</taxon>
        <taxon>Pelodictyon</taxon>
    </lineage>
</organism>
<evidence type="ECO:0000255" key="1">
    <source>
        <dbReference type="HAMAP-Rule" id="MF_01404"/>
    </source>
</evidence>
<comment type="catalytic activity">
    <reaction evidence="1">
        <text>L-arginine + H(+) = agmatine + CO2</text>
        <dbReference type="Rhea" id="RHEA:17641"/>
        <dbReference type="ChEBI" id="CHEBI:15378"/>
        <dbReference type="ChEBI" id="CHEBI:16526"/>
        <dbReference type="ChEBI" id="CHEBI:32682"/>
        <dbReference type="ChEBI" id="CHEBI:58145"/>
        <dbReference type="EC" id="4.1.1.19"/>
    </reaction>
</comment>
<comment type="cofactor">
    <cofactor evidence="1">
        <name>pyruvate</name>
        <dbReference type="ChEBI" id="CHEBI:15361"/>
    </cofactor>
    <text evidence="1">Binds 1 pyruvoyl group covalently per subunit.</text>
</comment>
<comment type="similarity">
    <text evidence="1">Belongs to the PdaD family.</text>
</comment>
<accession>Q3B5D1</accession>
<sequence>MSFVPSKVFFTKGVGRHKEYLSSFELALRDAKIEKCNLVTVSSIFPPKCERVSVEEGVKMLTPGQITFAVMARNSTNEYNRLIAASIGVAIPADDTQYGYLSEHHPFGEDAEQSGEYAEDLAATMLATTLGIEFDPNKDWDEREGIYKMSGKIINSYNITQSAEGENGMWTTVISCAVLLP</sequence>
<keyword id="KW-0210">Decarboxylase</keyword>
<keyword id="KW-0456">Lyase</keyword>
<keyword id="KW-0670">Pyruvate</keyword>
<keyword id="KW-1185">Reference proteome</keyword>
<feature type="chain" id="PRO_1000068401" description="Pyruvoyl-dependent arginine decarboxylase subunit beta" evidence="1">
    <location>
        <begin position="1"/>
        <end position="42"/>
    </location>
</feature>
<feature type="chain" id="PRO_1000068402" description="Pyruvoyl-dependent arginine decarboxylase subunit alpha" evidence="1">
    <location>
        <begin position="43"/>
        <end position="181"/>
    </location>
</feature>
<feature type="site" description="Cleavage (non-hydrolytic)" evidence="1">
    <location>
        <begin position="42"/>
        <end position="43"/>
    </location>
</feature>
<feature type="modified residue" description="Pyruvic acid (Ser)" evidence="1">
    <location>
        <position position="43"/>
    </location>
</feature>